<gene>
    <name evidence="1" type="primary">rpsH</name>
    <name type="ordered locus">CJE1861</name>
</gene>
<organism>
    <name type="scientific">Campylobacter jejuni (strain RM1221)</name>
    <dbReference type="NCBI Taxonomy" id="195099"/>
    <lineage>
        <taxon>Bacteria</taxon>
        <taxon>Pseudomonadati</taxon>
        <taxon>Campylobacterota</taxon>
        <taxon>Epsilonproteobacteria</taxon>
        <taxon>Campylobacterales</taxon>
        <taxon>Campylobacteraceae</taxon>
        <taxon>Campylobacter</taxon>
    </lineage>
</organism>
<protein>
    <recommendedName>
        <fullName evidence="1">Small ribosomal subunit protein uS8</fullName>
    </recommendedName>
    <alternativeName>
        <fullName evidence="2">30S ribosomal protein S8</fullName>
    </alternativeName>
</protein>
<accession>Q5HSA4</accession>
<name>RS8_CAMJR</name>
<evidence type="ECO:0000255" key="1">
    <source>
        <dbReference type="HAMAP-Rule" id="MF_01302"/>
    </source>
</evidence>
<evidence type="ECO:0000305" key="2"/>
<keyword id="KW-0687">Ribonucleoprotein</keyword>
<keyword id="KW-0689">Ribosomal protein</keyword>
<keyword id="KW-0694">RNA-binding</keyword>
<keyword id="KW-0699">rRNA-binding</keyword>
<comment type="function">
    <text evidence="1">One of the primary rRNA binding proteins, it binds directly to 16S rRNA central domain where it helps coordinate assembly of the platform of the 30S subunit.</text>
</comment>
<comment type="subunit">
    <text evidence="1">Part of the 30S ribosomal subunit. Contacts proteins S5 and S12.</text>
</comment>
<comment type="similarity">
    <text evidence="1">Belongs to the universal ribosomal protein uS8 family.</text>
</comment>
<feature type="chain" id="PRO_0000126387" description="Small ribosomal subunit protein uS8">
    <location>
        <begin position="1"/>
        <end position="131"/>
    </location>
</feature>
<dbReference type="EMBL" id="CP000025">
    <property type="protein sequence ID" value="AAW36283.1"/>
    <property type="molecule type" value="Genomic_DNA"/>
</dbReference>
<dbReference type="RefSeq" id="WP_011050016.1">
    <property type="nucleotide sequence ID" value="NC_003912.7"/>
</dbReference>
<dbReference type="SMR" id="Q5HSA4"/>
<dbReference type="KEGG" id="cjr:CJE1861"/>
<dbReference type="HOGENOM" id="CLU_098428_0_2_7"/>
<dbReference type="GO" id="GO:1990904">
    <property type="term" value="C:ribonucleoprotein complex"/>
    <property type="evidence" value="ECO:0007669"/>
    <property type="project" value="UniProtKB-KW"/>
</dbReference>
<dbReference type="GO" id="GO:0005840">
    <property type="term" value="C:ribosome"/>
    <property type="evidence" value="ECO:0007669"/>
    <property type="project" value="UniProtKB-KW"/>
</dbReference>
<dbReference type="GO" id="GO:0019843">
    <property type="term" value="F:rRNA binding"/>
    <property type="evidence" value="ECO:0007669"/>
    <property type="project" value="UniProtKB-UniRule"/>
</dbReference>
<dbReference type="GO" id="GO:0003735">
    <property type="term" value="F:structural constituent of ribosome"/>
    <property type="evidence" value="ECO:0007669"/>
    <property type="project" value="InterPro"/>
</dbReference>
<dbReference type="GO" id="GO:0006412">
    <property type="term" value="P:translation"/>
    <property type="evidence" value="ECO:0007669"/>
    <property type="project" value="UniProtKB-UniRule"/>
</dbReference>
<dbReference type="FunFam" id="3.30.1370.30:FF:000002">
    <property type="entry name" value="30S ribosomal protein S8"/>
    <property type="match status" value="1"/>
</dbReference>
<dbReference type="FunFam" id="3.30.1490.10:FF:000001">
    <property type="entry name" value="30S ribosomal protein S8"/>
    <property type="match status" value="1"/>
</dbReference>
<dbReference type="Gene3D" id="3.30.1370.30">
    <property type="match status" value="1"/>
</dbReference>
<dbReference type="Gene3D" id="3.30.1490.10">
    <property type="match status" value="1"/>
</dbReference>
<dbReference type="HAMAP" id="MF_01302_B">
    <property type="entry name" value="Ribosomal_uS8_B"/>
    <property type="match status" value="1"/>
</dbReference>
<dbReference type="InterPro" id="IPR000630">
    <property type="entry name" value="Ribosomal_uS8"/>
</dbReference>
<dbReference type="InterPro" id="IPR047863">
    <property type="entry name" value="Ribosomal_uS8_CS"/>
</dbReference>
<dbReference type="InterPro" id="IPR035987">
    <property type="entry name" value="Ribosomal_uS8_sf"/>
</dbReference>
<dbReference type="NCBIfam" id="NF001109">
    <property type="entry name" value="PRK00136.1"/>
    <property type="match status" value="1"/>
</dbReference>
<dbReference type="PANTHER" id="PTHR11758">
    <property type="entry name" value="40S RIBOSOMAL PROTEIN S15A"/>
    <property type="match status" value="1"/>
</dbReference>
<dbReference type="Pfam" id="PF00410">
    <property type="entry name" value="Ribosomal_S8"/>
    <property type="match status" value="1"/>
</dbReference>
<dbReference type="SUPFAM" id="SSF56047">
    <property type="entry name" value="Ribosomal protein S8"/>
    <property type="match status" value="1"/>
</dbReference>
<dbReference type="PROSITE" id="PS00053">
    <property type="entry name" value="RIBOSOMAL_S8"/>
    <property type="match status" value="1"/>
</dbReference>
<sequence length="131" mass="14747">MINDIISDSLTRIRNAGMRKLETTKLLHSKVIEALVGIFQAKGYIESFNVIEEDKKKFINVVLKYDEKGKSVINELKRISKPGRRVYKGKDEIKRFKNGYGTIVVSTSHGVLANDEAYKAGVGGEILCTIW</sequence>
<proteinExistence type="inferred from homology"/>
<reference key="1">
    <citation type="journal article" date="2005" name="PLoS Biol.">
        <title>Major structural differences and novel potential virulence mechanisms from the genomes of multiple Campylobacter species.</title>
        <authorList>
            <person name="Fouts D.E."/>
            <person name="Mongodin E.F."/>
            <person name="Mandrell R.E."/>
            <person name="Miller W.G."/>
            <person name="Rasko D.A."/>
            <person name="Ravel J."/>
            <person name="Brinkac L.M."/>
            <person name="DeBoy R.T."/>
            <person name="Parker C.T."/>
            <person name="Daugherty S.C."/>
            <person name="Dodson R.J."/>
            <person name="Durkin A.S."/>
            <person name="Madupu R."/>
            <person name="Sullivan S.A."/>
            <person name="Shetty J.U."/>
            <person name="Ayodeji M.A."/>
            <person name="Shvartsbeyn A."/>
            <person name="Schatz M.C."/>
            <person name="Badger J.H."/>
            <person name="Fraser C.M."/>
            <person name="Nelson K.E."/>
        </authorList>
    </citation>
    <scope>NUCLEOTIDE SEQUENCE [LARGE SCALE GENOMIC DNA]</scope>
    <source>
        <strain>RM1221</strain>
    </source>
</reference>